<organism>
    <name type="scientific">Azorhizobium caulinodans (strain ATCC 43989 / DSM 5975 / JCM 20966 / LMG 6465 / NBRC 14845 / NCIMB 13405 / ORS 571)</name>
    <dbReference type="NCBI Taxonomy" id="438753"/>
    <lineage>
        <taxon>Bacteria</taxon>
        <taxon>Pseudomonadati</taxon>
        <taxon>Pseudomonadota</taxon>
        <taxon>Alphaproteobacteria</taxon>
        <taxon>Hyphomicrobiales</taxon>
        <taxon>Xanthobacteraceae</taxon>
        <taxon>Azorhizobium</taxon>
    </lineage>
</organism>
<gene>
    <name evidence="1" type="primary">tig</name>
    <name type="ordered locus">AZC_1607</name>
</gene>
<protein>
    <recommendedName>
        <fullName evidence="1">Trigger factor</fullName>
        <shortName evidence="1">TF</shortName>
        <ecNumber evidence="1">5.2.1.8</ecNumber>
    </recommendedName>
    <alternativeName>
        <fullName evidence="1">PPIase</fullName>
    </alternativeName>
</protein>
<dbReference type="EC" id="5.2.1.8" evidence="1"/>
<dbReference type="EMBL" id="AP009384">
    <property type="protein sequence ID" value="BAF87605.1"/>
    <property type="molecule type" value="Genomic_DNA"/>
</dbReference>
<dbReference type="RefSeq" id="WP_012170135.1">
    <property type="nucleotide sequence ID" value="NC_009937.1"/>
</dbReference>
<dbReference type="SMR" id="A8HYF0"/>
<dbReference type="STRING" id="438753.AZC_1607"/>
<dbReference type="KEGG" id="azc:AZC_1607"/>
<dbReference type="eggNOG" id="COG0544">
    <property type="taxonomic scope" value="Bacteria"/>
</dbReference>
<dbReference type="HOGENOM" id="CLU_033058_2_2_5"/>
<dbReference type="Proteomes" id="UP000000270">
    <property type="component" value="Chromosome"/>
</dbReference>
<dbReference type="GO" id="GO:0005737">
    <property type="term" value="C:cytoplasm"/>
    <property type="evidence" value="ECO:0007669"/>
    <property type="project" value="UniProtKB-SubCell"/>
</dbReference>
<dbReference type="GO" id="GO:0003755">
    <property type="term" value="F:peptidyl-prolyl cis-trans isomerase activity"/>
    <property type="evidence" value="ECO:0007669"/>
    <property type="project" value="UniProtKB-UniRule"/>
</dbReference>
<dbReference type="GO" id="GO:0044183">
    <property type="term" value="F:protein folding chaperone"/>
    <property type="evidence" value="ECO:0007669"/>
    <property type="project" value="TreeGrafter"/>
</dbReference>
<dbReference type="GO" id="GO:0043022">
    <property type="term" value="F:ribosome binding"/>
    <property type="evidence" value="ECO:0007669"/>
    <property type="project" value="TreeGrafter"/>
</dbReference>
<dbReference type="GO" id="GO:0051083">
    <property type="term" value="P:'de novo' cotranslational protein folding"/>
    <property type="evidence" value="ECO:0007669"/>
    <property type="project" value="TreeGrafter"/>
</dbReference>
<dbReference type="GO" id="GO:0051301">
    <property type="term" value="P:cell division"/>
    <property type="evidence" value="ECO:0007669"/>
    <property type="project" value="UniProtKB-KW"/>
</dbReference>
<dbReference type="GO" id="GO:0061077">
    <property type="term" value="P:chaperone-mediated protein folding"/>
    <property type="evidence" value="ECO:0007669"/>
    <property type="project" value="TreeGrafter"/>
</dbReference>
<dbReference type="GO" id="GO:0015031">
    <property type="term" value="P:protein transport"/>
    <property type="evidence" value="ECO:0007669"/>
    <property type="project" value="UniProtKB-UniRule"/>
</dbReference>
<dbReference type="GO" id="GO:0043335">
    <property type="term" value="P:protein unfolding"/>
    <property type="evidence" value="ECO:0007669"/>
    <property type="project" value="TreeGrafter"/>
</dbReference>
<dbReference type="FunFam" id="3.10.50.40:FF:000001">
    <property type="entry name" value="Trigger factor"/>
    <property type="match status" value="1"/>
</dbReference>
<dbReference type="Gene3D" id="3.10.50.40">
    <property type="match status" value="1"/>
</dbReference>
<dbReference type="Gene3D" id="3.30.70.1050">
    <property type="entry name" value="Trigger factor ribosome-binding domain"/>
    <property type="match status" value="1"/>
</dbReference>
<dbReference type="Gene3D" id="1.10.3120.10">
    <property type="entry name" value="Trigger factor, C-terminal domain"/>
    <property type="match status" value="1"/>
</dbReference>
<dbReference type="HAMAP" id="MF_00303">
    <property type="entry name" value="Trigger_factor_Tig"/>
    <property type="match status" value="1"/>
</dbReference>
<dbReference type="InterPro" id="IPR046357">
    <property type="entry name" value="PPIase_dom_sf"/>
</dbReference>
<dbReference type="InterPro" id="IPR001179">
    <property type="entry name" value="PPIase_FKBP_dom"/>
</dbReference>
<dbReference type="InterPro" id="IPR005215">
    <property type="entry name" value="Trig_fac"/>
</dbReference>
<dbReference type="InterPro" id="IPR008880">
    <property type="entry name" value="Trigger_fac_C"/>
</dbReference>
<dbReference type="InterPro" id="IPR037041">
    <property type="entry name" value="Trigger_fac_C_sf"/>
</dbReference>
<dbReference type="InterPro" id="IPR008881">
    <property type="entry name" value="Trigger_fac_ribosome-bd_bac"/>
</dbReference>
<dbReference type="InterPro" id="IPR036611">
    <property type="entry name" value="Trigger_fac_ribosome-bd_sf"/>
</dbReference>
<dbReference type="InterPro" id="IPR027304">
    <property type="entry name" value="Trigger_fact/SurA_dom_sf"/>
</dbReference>
<dbReference type="NCBIfam" id="TIGR00115">
    <property type="entry name" value="tig"/>
    <property type="match status" value="1"/>
</dbReference>
<dbReference type="PANTHER" id="PTHR30560">
    <property type="entry name" value="TRIGGER FACTOR CHAPERONE AND PEPTIDYL-PROLYL CIS/TRANS ISOMERASE"/>
    <property type="match status" value="1"/>
</dbReference>
<dbReference type="PANTHER" id="PTHR30560:SF3">
    <property type="entry name" value="TRIGGER FACTOR-LIKE PROTEIN TIG, CHLOROPLASTIC"/>
    <property type="match status" value="1"/>
</dbReference>
<dbReference type="Pfam" id="PF00254">
    <property type="entry name" value="FKBP_C"/>
    <property type="match status" value="1"/>
</dbReference>
<dbReference type="Pfam" id="PF05698">
    <property type="entry name" value="Trigger_C"/>
    <property type="match status" value="1"/>
</dbReference>
<dbReference type="Pfam" id="PF05697">
    <property type="entry name" value="Trigger_N"/>
    <property type="match status" value="1"/>
</dbReference>
<dbReference type="PIRSF" id="PIRSF003095">
    <property type="entry name" value="Trigger_factor"/>
    <property type="match status" value="1"/>
</dbReference>
<dbReference type="SUPFAM" id="SSF54534">
    <property type="entry name" value="FKBP-like"/>
    <property type="match status" value="1"/>
</dbReference>
<dbReference type="SUPFAM" id="SSF109998">
    <property type="entry name" value="Triger factor/SurA peptide-binding domain-like"/>
    <property type="match status" value="1"/>
</dbReference>
<dbReference type="SUPFAM" id="SSF102735">
    <property type="entry name" value="Trigger factor ribosome-binding domain"/>
    <property type="match status" value="1"/>
</dbReference>
<dbReference type="PROSITE" id="PS50059">
    <property type="entry name" value="FKBP_PPIASE"/>
    <property type="match status" value="1"/>
</dbReference>
<sequence length="449" mass="49889">MQVTETQAEGLKRAYTVVLPAAELDAKAQDRLVELKDKVRINGFRPGKVPLSHLKSLYGKSVMAEVIEQAVTEANGKIVEDNGLRLALPPKVELPQAEDEVKSVIEGQADLKYTVELEVLPKIELGNFKDIAIEKPVAIVTDEEVDEMVKRIADGNRSFDAKEGAAASGDRITVDFVGSIDGVPFEGGAGEDVPVVIGSNSFIPGFEEQLIGLSAGEERTINVTFPTNYLSAQLAGKDASFAVKAKQVEAPGELTIDDEFAKTLGLESLDKLKENVRERIAKEHEGATRQRVKRQLLDALDAGHKFDVPPTLVSQEFEGVWQQIQTDLQQQGRTFADESTTEEEARAEYQRIAERRVRLGLVLAEIGERNNIQVTDDEVTRAVVERARQFPGQEQQVWEYYRRNAQAMASLRAPLFEEKVVDFLLELAKVTEKQVSREELYKEEEEKAA</sequence>
<reference key="1">
    <citation type="submission" date="2007-04" db="EMBL/GenBank/DDBJ databases">
        <title>Complete genome sequence of the nitrogen-fixing bacterium Azorhizobium caulinodans ORS571.</title>
        <authorList>
            <person name="Lee K.B."/>
            <person name="Backer P.D."/>
            <person name="Aono T."/>
            <person name="Liu C.T."/>
            <person name="Suzuki S."/>
            <person name="Suzuki T."/>
            <person name="Kaneko T."/>
            <person name="Yamada M."/>
            <person name="Tabata S."/>
            <person name="Kupfer D.M."/>
            <person name="Najar F.Z."/>
            <person name="Wiley G.B."/>
            <person name="Roe B."/>
            <person name="Binnewies T."/>
            <person name="Ussery D."/>
            <person name="Vereecke D."/>
            <person name="Gevers D."/>
            <person name="Holsters M."/>
            <person name="Oyaizu H."/>
        </authorList>
    </citation>
    <scope>NUCLEOTIDE SEQUENCE [LARGE SCALE GENOMIC DNA]</scope>
    <source>
        <strain>ATCC 43989 / DSM 5975 / JCM 20966 / LMG 6465 / NBRC 14845 / NCIMB 13405 / ORS 571</strain>
    </source>
</reference>
<evidence type="ECO:0000255" key="1">
    <source>
        <dbReference type="HAMAP-Rule" id="MF_00303"/>
    </source>
</evidence>
<proteinExistence type="inferred from homology"/>
<comment type="function">
    <text evidence="1">Involved in protein export. Acts as a chaperone by maintaining the newly synthesized protein in an open conformation. Functions as a peptidyl-prolyl cis-trans isomerase.</text>
</comment>
<comment type="catalytic activity">
    <reaction evidence="1">
        <text>[protein]-peptidylproline (omega=180) = [protein]-peptidylproline (omega=0)</text>
        <dbReference type="Rhea" id="RHEA:16237"/>
        <dbReference type="Rhea" id="RHEA-COMP:10747"/>
        <dbReference type="Rhea" id="RHEA-COMP:10748"/>
        <dbReference type="ChEBI" id="CHEBI:83833"/>
        <dbReference type="ChEBI" id="CHEBI:83834"/>
        <dbReference type="EC" id="5.2.1.8"/>
    </reaction>
</comment>
<comment type="subcellular location">
    <subcellularLocation>
        <location>Cytoplasm</location>
    </subcellularLocation>
    <text evidence="1">About half TF is bound to the ribosome near the polypeptide exit tunnel while the other half is free in the cytoplasm.</text>
</comment>
<comment type="domain">
    <text evidence="1">Consists of 3 domains; the N-terminus binds the ribosome, the middle domain has PPIase activity, while the C-terminus has intrinsic chaperone activity on its own.</text>
</comment>
<comment type="similarity">
    <text evidence="1">Belongs to the FKBP-type PPIase family. Tig subfamily.</text>
</comment>
<accession>A8HYF0</accession>
<keyword id="KW-0131">Cell cycle</keyword>
<keyword id="KW-0132">Cell division</keyword>
<keyword id="KW-0143">Chaperone</keyword>
<keyword id="KW-0963">Cytoplasm</keyword>
<keyword id="KW-0413">Isomerase</keyword>
<keyword id="KW-1185">Reference proteome</keyword>
<keyword id="KW-0697">Rotamase</keyword>
<name>TIG_AZOC5</name>
<feature type="chain" id="PRO_1000071984" description="Trigger factor">
    <location>
        <begin position="1"/>
        <end position="449"/>
    </location>
</feature>
<feature type="domain" description="PPIase FKBP-type" evidence="1">
    <location>
        <begin position="169"/>
        <end position="254"/>
    </location>
</feature>